<sequence length="196" mass="20533">MNFMKNLTRGIIRENPTFVLVLGMCPTLAVTTSAINGMGMGLATMLVLIGSNVAISALRKVIPDNIRIPAFVVVIASFVTIVGMLMKAYVPALDAALGIFIPLIVVNCIILARAEAFAFSNGIADSFADAVGMGLGFTLALTILGSIREILGAGSIFGFSLFGAAYEPVLLMILPPGAFLTLGLLIGLINWKTKKA</sequence>
<proteinExistence type="evidence at protein level"/>
<feature type="chain" id="PRO_0000443493" description="Na(+)-translocating ferredoxin:NAD(+) oxidoreductase complex subunit E">
    <location>
        <begin position="1"/>
        <end position="196"/>
    </location>
</feature>
<feature type="transmembrane region" description="Helical" evidence="1">
    <location>
        <begin position="38"/>
        <end position="58"/>
    </location>
</feature>
<feature type="transmembrane region" description="Helical" evidence="1">
    <location>
        <begin position="68"/>
        <end position="88"/>
    </location>
</feature>
<feature type="transmembrane region" description="Helical" evidence="1">
    <location>
        <begin position="92"/>
        <end position="112"/>
    </location>
</feature>
<feature type="transmembrane region" description="Helical" evidence="1">
    <location>
        <begin position="127"/>
        <end position="147"/>
    </location>
</feature>
<feature type="transmembrane region" description="Helical" evidence="1">
    <location>
        <begin position="169"/>
        <end position="189"/>
    </location>
</feature>
<protein>
    <recommendedName>
        <fullName evidence="5">Na(+)-translocating ferredoxin:NAD(+) oxidoreductase complex subunit E</fullName>
        <ecNumber evidence="2 3">7.2.1.2</ecNumber>
    </recommendedName>
    <alternativeName>
        <fullName evidence="1 5">Rnf electron transport complex subunit E</fullName>
    </alternativeName>
</protein>
<reference key="1">
    <citation type="journal article" date="2009" name="Environ. Microbiol.">
        <title>Genetic, immunological and biochemical evidence for a Rnf complex in the acetogen Acetobacterium woodii.</title>
        <authorList>
            <person name="Biegel E."/>
            <person name="Schmidt S."/>
            <person name="Muller V."/>
        </authorList>
    </citation>
    <scope>NUCLEOTIDE SEQUENCE [GENOMIC DNA]</scope>
    <source>
        <strain>ATCC 29683 / DSM 1030 / JCM 2381 / KCTC 1655 / WB1</strain>
    </source>
</reference>
<reference key="2">
    <citation type="submission" date="2011-07" db="EMBL/GenBank/DDBJ databases">
        <title>Complete genome sequence of Acetobacterium woodii.</title>
        <authorList>
            <person name="Poehlein A."/>
            <person name="Schmidt S."/>
            <person name="Kaster A.-K."/>
            <person name="Goenrich M."/>
            <person name="Vollmers J."/>
            <person name="Thuermer A."/>
            <person name="Gottschalk G."/>
            <person name="Thauer R.K."/>
            <person name="Daniel R."/>
            <person name="Mueller V."/>
        </authorList>
    </citation>
    <scope>NUCLEOTIDE SEQUENCE [LARGE SCALE GENOMIC DNA]</scope>
    <source>
        <strain>ATCC 29683 / DSM 1030 / JCM 2381 / KCTC 1655 / WB1</strain>
    </source>
</reference>
<reference key="3">
    <citation type="journal article" date="2010" name="Proc. Natl. Acad. Sci. U.S.A.">
        <title>Bacterial Na+-translocating ferredoxin:NAD+ oxidoreductase.</title>
        <authorList>
            <person name="Biegel E."/>
            <person name="Mueller V."/>
        </authorList>
    </citation>
    <scope>FUNCTION</scope>
    <scope>CATALYTIC ACTIVITY</scope>
    <scope>SUBUNIT</scope>
    <source>
        <strain>ATCC 29683 / DSM 1030 / JCM 2381 / KCTC 1655 / WB1</strain>
    </source>
</reference>
<reference key="4">
    <citation type="journal article" date="2013" name="J. Biol. Chem.">
        <title>The ferredoxin:NAD+ oxidoreductase (Rnf) from the acetogen Acetobacterium woodii requires Na+ and is reversibly coupled to the membrane potential.</title>
        <authorList>
            <person name="Hess V."/>
            <person name="Schuchmann K."/>
            <person name="Mueller V."/>
        </authorList>
    </citation>
    <scope>FUNCTION</scope>
    <scope>CATALYTIC ACTIVITY</scope>
    <source>
        <strain>ATCC 29683 / DSM 1030 / JCM 2381 / KCTC 1655 / WB1</strain>
    </source>
</reference>
<organism>
    <name type="scientific">Acetobacterium woodii (strain ATCC 29683 / DSM 1030 / JCM 2381 / KCTC 1655 / WB1)</name>
    <dbReference type="NCBI Taxonomy" id="931626"/>
    <lineage>
        <taxon>Bacteria</taxon>
        <taxon>Bacillati</taxon>
        <taxon>Bacillota</taxon>
        <taxon>Clostridia</taxon>
        <taxon>Eubacteriales</taxon>
        <taxon>Eubacteriaceae</taxon>
        <taxon>Acetobacterium</taxon>
    </lineage>
</organism>
<comment type="function">
    <text evidence="2 3">Part of a membrane-bound complex that couples electron transfer with translocation of ions across the membrane. Couples electron transfer from reduced ferredoxin to NAD(+) with electrogenic movement of Na(+) out of the cell. Involved in caffeate respiration.</text>
</comment>
<comment type="catalytic activity">
    <reaction evidence="2 3">
        <text>2 reduced [2Fe-2S]-[ferredoxin] + Na(+)(in) + NAD(+) + H(+) = 2 oxidized [2Fe-2S]-[ferredoxin] + Na(+)(out) + NADH</text>
        <dbReference type="Rhea" id="RHEA:46800"/>
        <dbReference type="Rhea" id="RHEA-COMP:10000"/>
        <dbReference type="Rhea" id="RHEA-COMP:10001"/>
        <dbReference type="ChEBI" id="CHEBI:15378"/>
        <dbReference type="ChEBI" id="CHEBI:29101"/>
        <dbReference type="ChEBI" id="CHEBI:33737"/>
        <dbReference type="ChEBI" id="CHEBI:33738"/>
        <dbReference type="ChEBI" id="CHEBI:57540"/>
        <dbReference type="ChEBI" id="CHEBI:57945"/>
        <dbReference type="EC" id="7.2.1.2"/>
    </reaction>
</comment>
<comment type="subunit">
    <text evidence="1 6">The complex is composed of six subunits: RnfA, RnfB, RnfC, RnfD, RnfE and RnfG.</text>
</comment>
<comment type="subcellular location">
    <subcellularLocation>
        <location evidence="1">Cell membrane</location>
        <topology evidence="1">Multi-pass membrane protein</topology>
    </subcellularLocation>
</comment>
<comment type="similarity">
    <text evidence="1">Belongs to the NqrDE/RnfAE family.</text>
</comment>
<accession>H6LC29</accession>
<accession>C4N8U3</accession>
<name>RNFE_ACEWD</name>
<gene>
    <name evidence="1 4" type="primary">rnfE</name>
    <name evidence="7" type="ordered locus">Awo_c22030</name>
</gene>
<keyword id="KW-0002">3D-structure</keyword>
<keyword id="KW-1003">Cell membrane</keyword>
<keyword id="KW-0249">Electron transport</keyword>
<keyword id="KW-0472">Membrane</keyword>
<keyword id="KW-0520">NAD</keyword>
<keyword id="KW-1185">Reference proteome</keyword>
<keyword id="KW-1278">Translocase</keyword>
<keyword id="KW-0812">Transmembrane</keyword>
<keyword id="KW-1133">Transmembrane helix</keyword>
<keyword id="KW-0813">Transport</keyword>
<evidence type="ECO:0000255" key="1">
    <source>
        <dbReference type="HAMAP-Rule" id="MF_00478"/>
    </source>
</evidence>
<evidence type="ECO:0000269" key="2">
    <source>
    </source>
</evidence>
<evidence type="ECO:0000269" key="3">
    <source>
    </source>
</evidence>
<evidence type="ECO:0000303" key="4">
    <source>
    </source>
</evidence>
<evidence type="ECO:0000305" key="5"/>
<evidence type="ECO:0000305" key="6">
    <source>
    </source>
</evidence>
<evidence type="ECO:0000312" key="7">
    <source>
        <dbReference type="EMBL" id="AFA48977.1"/>
    </source>
</evidence>
<dbReference type="EC" id="7.2.1.2" evidence="2 3"/>
<dbReference type="EMBL" id="FJ416148">
    <property type="protein sequence ID" value="ACR23745.1"/>
    <property type="molecule type" value="Genomic_DNA"/>
</dbReference>
<dbReference type="EMBL" id="CP002987">
    <property type="protein sequence ID" value="AFA48977.1"/>
    <property type="molecule type" value="Genomic_DNA"/>
</dbReference>
<dbReference type="RefSeq" id="WP_014356577.1">
    <property type="nucleotide sequence ID" value="NC_016894.1"/>
</dbReference>
<dbReference type="PDB" id="9ERI">
    <property type="method" value="EM"/>
    <property type="resolution" value="3.30 A"/>
    <property type="chains" value="E=1-196"/>
</dbReference>
<dbReference type="PDB" id="9ERJ">
    <property type="method" value="EM"/>
    <property type="resolution" value="2.90 A"/>
    <property type="chains" value="E=1-196"/>
</dbReference>
<dbReference type="PDB" id="9ERK">
    <property type="method" value="EM"/>
    <property type="resolution" value="2.80 A"/>
    <property type="chains" value="E=1-196"/>
</dbReference>
<dbReference type="PDB" id="9ERL">
    <property type="method" value="EM"/>
    <property type="resolution" value="3.00 A"/>
    <property type="chains" value="E=1-196"/>
</dbReference>
<dbReference type="PDBsum" id="9ERI"/>
<dbReference type="PDBsum" id="9ERJ"/>
<dbReference type="PDBsum" id="9ERK"/>
<dbReference type="PDBsum" id="9ERL"/>
<dbReference type="EMDB" id="EMD-19915"/>
<dbReference type="EMDB" id="EMD-19916"/>
<dbReference type="EMDB" id="EMD-19919"/>
<dbReference type="EMDB" id="EMD-19920"/>
<dbReference type="SMR" id="H6LC29"/>
<dbReference type="STRING" id="931626.Awo_c22030"/>
<dbReference type="TCDB" id="3.D.6.1.2">
    <property type="family name" value="the ion (h(+) or na(+))-translocating nadh:ferredoxin oxidoreductase (nfo or rnf) family"/>
</dbReference>
<dbReference type="KEGG" id="awo:Awo_c22030"/>
<dbReference type="eggNOG" id="COG4660">
    <property type="taxonomic scope" value="Bacteria"/>
</dbReference>
<dbReference type="HOGENOM" id="CLU_046659_1_1_9"/>
<dbReference type="OrthoDB" id="9790976at2"/>
<dbReference type="BioCyc" id="MetaCyc:MONOMER-21343"/>
<dbReference type="BRENDA" id="7.2.1.2">
    <property type="organism ID" value="52"/>
</dbReference>
<dbReference type="Proteomes" id="UP000007177">
    <property type="component" value="Chromosome"/>
</dbReference>
<dbReference type="GO" id="GO:0005886">
    <property type="term" value="C:plasma membrane"/>
    <property type="evidence" value="ECO:0007669"/>
    <property type="project" value="UniProtKB-SubCell"/>
</dbReference>
<dbReference type="GO" id="GO:0022900">
    <property type="term" value="P:electron transport chain"/>
    <property type="evidence" value="ECO:0007669"/>
    <property type="project" value="UniProtKB-UniRule"/>
</dbReference>
<dbReference type="HAMAP" id="MF_00478">
    <property type="entry name" value="RsxE_RnfE"/>
    <property type="match status" value="1"/>
</dbReference>
<dbReference type="InterPro" id="IPR003667">
    <property type="entry name" value="NqrDE/RnfAE"/>
</dbReference>
<dbReference type="InterPro" id="IPR010968">
    <property type="entry name" value="RnfE"/>
</dbReference>
<dbReference type="NCBIfam" id="NF009070">
    <property type="entry name" value="PRK12405.1"/>
    <property type="match status" value="1"/>
</dbReference>
<dbReference type="NCBIfam" id="TIGR01948">
    <property type="entry name" value="rnfE"/>
    <property type="match status" value="1"/>
</dbReference>
<dbReference type="PANTHER" id="PTHR30586">
    <property type="entry name" value="ELECTRON TRANSPORT COMPLEX PROTEIN RNFE"/>
    <property type="match status" value="1"/>
</dbReference>
<dbReference type="PANTHER" id="PTHR30586:SF0">
    <property type="entry name" value="ION-TRANSLOCATING OXIDOREDUCTASE COMPLEX SUBUNIT E"/>
    <property type="match status" value="1"/>
</dbReference>
<dbReference type="Pfam" id="PF02508">
    <property type="entry name" value="Rnf-Nqr"/>
    <property type="match status" value="1"/>
</dbReference>
<dbReference type="PIRSF" id="PIRSF006102">
    <property type="entry name" value="NQR_DE"/>
    <property type="match status" value="1"/>
</dbReference>